<sequence>MFKKLLGDPNTRKLKRYFPLVSDVNIFEEDLLSLSDDDLRTRTSEFRSKLEKVSSPNEELSLLDELLPEAFAVVREASKRVLGMRHFDVQLIGGMVLHEGQIAEMKTGEGKTLVATLPSYLNALTGRGVHVVTVNDYLARRDAEWMGQIHRFLGLSVGLVQQSMAPLERKKNYECDITYATNSELGFDYLRDNMAADKSEIVQRDFQFCVIDEVDSILIDEARTPLIISGQVERSQEKYKQAAQVVENLKRAIDTSKDGIDPEGDYEVDEKQRSCILTDEGFANTEKLLNVQDLFDPKEPWAHYVTNALKAKELFIKDVNYIVRNDEAVIVDEFTGRVMPGRRWSDGQHQAIEAKENLSIQPETQTLASITYQNFFLLYPRLSGMTGTAKTEEVEFEKTYKLQTTVVPTNRKISRQDWVDQVFKTEAAKWRAVAKETADIHQKGRPVLVGTTSVEKSELLSTLLSEQQVPHNLLNAKPENVEREAEIVAQAGRAGAVTIATNMAGRGTDIILGGNSDYMARLKIKEILSNRLVKPEEGHKPPVSPQRKTKSAGFKEEKNKNLSISKQNQSKSFLNIFPVSLTEDTDAKLASLASKLVKEWGDRSLSSIELDDYIATAAEKTPTQDKNIKELRIAIQLIKNEYEEVLSQEETNVRRVGGLHVIGTERHESRRVDNQLRGRAGRQGDLGSTRFFLSLEDNLLRIFGGDRVAGLMNAFRVEEDMPIESGMLTRSLEGAQKKVETYYYDIRKQIFEYDEVMNNQRKAVYSERRRVLDGRELKLQVIGYGQRTMEEIVEAYVNEDLPPEEWNLTNLVSKVKEFIYLLEDLKPEDLLGLNKNELKDFLKEQLRNAYDMKEAKVEQSHPGIMRQAERFFILQQLDTLWREHLQSMDSLKESVGLRGYGQKDPLIEYKNEGYDMFLEMMVNMRRNVIYSMFMFQPAQKKVEA</sequence>
<gene>
    <name evidence="1" type="primary">secA</name>
    <name type="ordered locus">NATL1_20951</name>
</gene>
<accession>A2C591</accession>
<name>SECA_PROM1</name>
<organism>
    <name type="scientific">Prochlorococcus marinus (strain NATL1A)</name>
    <dbReference type="NCBI Taxonomy" id="167555"/>
    <lineage>
        <taxon>Bacteria</taxon>
        <taxon>Bacillati</taxon>
        <taxon>Cyanobacteriota</taxon>
        <taxon>Cyanophyceae</taxon>
        <taxon>Synechococcales</taxon>
        <taxon>Prochlorococcaceae</taxon>
        <taxon>Prochlorococcus</taxon>
    </lineage>
</organism>
<comment type="function">
    <text evidence="1">Part of the Sec protein translocase complex. Interacts with the SecYEG preprotein conducting channel. Has a central role in coupling the hydrolysis of ATP to the transfer of proteins into and across the cell membrane, serving as an ATP-driven molecular motor driving the stepwise translocation of polypeptide chains across the membrane.</text>
</comment>
<comment type="function">
    <text evidence="1">Probably participates in protein translocation into and across both the cytoplasmic and thylakoid membranes in cyanobacterial cells.</text>
</comment>
<comment type="catalytic activity">
    <reaction evidence="1">
        <text>ATP + H2O + cellular proteinSide 1 = ADP + phosphate + cellular proteinSide 2.</text>
        <dbReference type="EC" id="7.4.2.8"/>
    </reaction>
</comment>
<comment type="subunit">
    <text evidence="1">Monomer and homodimer. Part of the essential Sec protein translocation apparatus which comprises SecA, SecYEG and auxiliary proteins SecDF. Other proteins may also be involved.</text>
</comment>
<comment type="subcellular location">
    <subcellularLocation>
        <location evidence="1">Cell inner membrane</location>
        <topology evidence="1">Peripheral membrane protein</topology>
        <orientation evidence="1">Cytoplasmic side</orientation>
    </subcellularLocation>
    <subcellularLocation>
        <location evidence="1">Cellular thylakoid membrane</location>
        <topology evidence="1">Peripheral membrane protein</topology>
        <orientation evidence="1">Cytoplasmic side</orientation>
    </subcellularLocation>
    <subcellularLocation>
        <location evidence="1">Cytoplasm</location>
    </subcellularLocation>
</comment>
<comment type="similarity">
    <text evidence="1">Belongs to the SecA family.</text>
</comment>
<feature type="chain" id="PRO_0000318411" description="Protein translocase subunit SecA">
    <location>
        <begin position="1"/>
        <end position="944"/>
    </location>
</feature>
<feature type="region of interest" description="Disordered" evidence="2">
    <location>
        <begin position="533"/>
        <end position="565"/>
    </location>
</feature>
<feature type="binding site" evidence="1">
    <location>
        <position position="90"/>
    </location>
    <ligand>
        <name>ATP</name>
        <dbReference type="ChEBI" id="CHEBI:30616"/>
    </ligand>
</feature>
<feature type="binding site" evidence="1">
    <location>
        <begin position="108"/>
        <end position="112"/>
    </location>
    <ligand>
        <name>ATP</name>
        <dbReference type="ChEBI" id="CHEBI:30616"/>
    </ligand>
</feature>
<feature type="binding site" evidence="1">
    <location>
        <position position="509"/>
    </location>
    <ligand>
        <name>ATP</name>
        <dbReference type="ChEBI" id="CHEBI:30616"/>
    </ligand>
</feature>
<protein>
    <recommendedName>
        <fullName evidence="1">Protein translocase subunit SecA</fullName>
        <ecNumber evidence="1">7.4.2.8</ecNumber>
    </recommendedName>
</protein>
<proteinExistence type="inferred from homology"/>
<keyword id="KW-0067">ATP-binding</keyword>
<keyword id="KW-0997">Cell inner membrane</keyword>
<keyword id="KW-1003">Cell membrane</keyword>
<keyword id="KW-0963">Cytoplasm</keyword>
<keyword id="KW-0472">Membrane</keyword>
<keyword id="KW-0547">Nucleotide-binding</keyword>
<keyword id="KW-0653">Protein transport</keyword>
<keyword id="KW-0793">Thylakoid</keyword>
<keyword id="KW-1278">Translocase</keyword>
<keyword id="KW-0811">Translocation</keyword>
<keyword id="KW-0813">Transport</keyword>
<evidence type="ECO:0000255" key="1">
    <source>
        <dbReference type="HAMAP-Rule" id="MF_01382"/>
    </source>
</evidence>
<evidence type="ECO:0000256" key="2">
    <source>
        <dbReference type="SAM" id="MobiDB-lite"/>
    </source>
</evidence>
<dbReference type="EC" id="7.4.2.8" evidence="1"/>
<dbReference type="EMBL" id="CP000553">
    <property type="protein sequence ID" value="ABM76651.1"/>
    <property type="molecule type" value="Genomic_DNA"/>
</dbReference>
<dbReference type="RefSeq" id="WP_011824595.1">
    <property type="nucleotide sequence ID" value="NC_008819.1"/>
</dbReference>
<dbReference type="SMR" id="A2C591"/>
<dbReference type="KEGG" id="pme:NATL1_20951"/>
<dbReference type="eggNOG" id="COG0653">
    <property type="taxonomic scope" value="Bacteria"/>
</dbReference>
<dbReference type="HOGENOM" id="CLU_005314_3_0_3"/>
<dbReference type="Proteomes" id="UP000002592">
    <property type="component" value="Chromosome"/>
</dbReference>
<dbReference type="GO" id="GO:0031522">
    <property type="term" value="C:cell envelope Sec protein transport complex"/>
    <property type="evidence" value="ECO:0007669"/>
    <property type="project" value="TreeGrafter"/>
</dbReference>
<dbReference type="GO" id="GO:0005829">
    <property type="term" value="C:cytosol"/>
    <property type="evidence" value="ECO:0007669"/>
    <property type="project" value="TreeGrafter"/>
</dbReference>
<dbReference type="GO" id="GO:0031676">
    <property type="term" value="C:plasma membrane-derived thylakoid membrane"/>
    <property type="evidence" value="ECO:0007669"/>
    <property type="project" value="UniProtKB-SubCell"/>
</dbReference>
<dbReference type="GO" id="GO:0005524">
    <property type="term" value="F:ATP binding"/>
    <property type="evidence" value="ECO:0007669"/>
    <property type="project" value="UniProtKB-UniRule"/>
</dbReference>
<dbReference type="GO" id="GO:0008564">
    <property type="term" value="F:protein-exporting ATPase activity"/>
    <property type="evidence" value="ECO:0007669"/>
    <property type="project" value="UniProtKB-EC"/>
</dbReference>
<dbReference type="GO" id="GO:0065002">
    <property type="term" value="P:intracellular protein transmembrane transport"/>
    <property type="evidence" value="ECO:0007669"/>
    <property type="project" value="UniProtKB-UniRule"/>
</dbReference>
<dbReference type="GO" id="GO:0017038">
    <property type="term" value="P:protein import"/>
    <property type="evidence" value="ECO:0007669"/>
    <property type="project" value="InterPro"/>
</dbReference>
<dbReference type="GO" id="GO:0006605">
    <property type="term" value="P:protein targeting"/>
    <property type="evidence" value="ECO:0007669"/>
    <property type="project" value="UniProtKB-UniRule"/>
</dbReference>
<dbReference type="GO" id="GO:0043952">
    <property type="term" value="P:protein transport by the Sec complex"/>
    <property type="evidence" value="ECO:0007669"/>
    <property type="project" value="TreeGrafter"/>
</dbReference>
<dbReference type="CDD" id="cd17928">
    <property type="entry name" value="DEXDc_SecA"/>
    <property type="match status" value="1"/>
</dbReference>
<dbReference type="CDD" id="cd18803">
    <property type="entry name" value="SF2_C_secA"/>
    <property type="match status" value="1"/>
</dbReference>
<dbReference type="FunFam" id="3.90.1440.10:FF:000003">
    <property type="entry name" value="Preprotein translocase SecA subunit"/>
    <property type="match status" value="1"/>
</dbReference>
<dbReference type="FunFam" id="1.10.3060.10:FF:000003">
    <property type="entry name" value="Protein translocase subunit SecA"/>
    <property type="match status" value="1"/>
</dbReference>
<dbReference type="FunFam" id="3.40.50.300:FF:000334">
    <property type="entry name" value="Protein translocase subunit SecA"/>
    <property type="match status" value="1"/>
</dbReference>
<dbReference type="Gene3D" id="1.10.3060.10">
    <property type="entry name" value="Helical scaffold and wing domains of SecA"/>
    <property type="match status" value="1"/>
</dbReference>
<dbReference type="Gene3D" id="3.40.50.300">
    <property type="entry name" value="P-loop containing nucleotide triphosphate hydrolases"/>
    <property type="match status" value="2"/>
</dbReference>
<dbReference type="Gene3D" id="3.90.1440.10">
    <property type="entry name" value="SecA, preprotein cross-linking domain"/>
    <property type="match status" value="1"/>
</dbReference>
<dbReference type="HAMAP" id="MF_01382">
    <property type="entry name" value="SecA"/>
    <property type="match status" value="1"/>
</dbReference>
<dbReference type="InterPro" id="IPR014001">
    <property type="entry name" value="Helicase_ATP-bd"/>
</dbReference>
<dbReference type="InterPro" id="IPR027417">
    <property type="entry name" value="P-loop_NTPase"/>
</dbReference>
<dbReference type="InterPro" id="IPR000185">
    <property type="entry name" value="SecA"/>
</dbReference>
<dbReference type="InterPro" id="IPR020937">
    <property type="entry name" value="SecA_CS"/>
</dbReference>
<dbReference type="InterPro" id="IPR011115">
    <property type="entry name" value="SecA_DEAD"/>
</dbReference>
<dbReference type="InterPro" id="IPR014018">
    <property type="entry name" value="SecA_motor_DEAD"/>
</dbReference>
<dbReference type="InterPro" id="IPR011130">
    <property type="entry name" value="SecA_preprotein_X-link_dom"/>
</dbReference>
<dbReference type="InterPro" id="IPR044722">
    <property type="entry name" value="SecA_SF2_C"/>
</dbReference>
<dbReference type="InterPro" id="IPR011116">
    <property type="entry name" value="SecA_Wing/Scaffold"/>
</dbReference>
<dbReference type="InterPro" id="IPR036266">
    <property type="entry name" value="SecA_Wing/Scaffold_sf"/>
</dbReference>
<dbReference type="InterPro" id="IPR036670">
    <property type="entry name" value="SecA_X-link_sf"/>
</dbReference>
<dbReference type="NCBIfam" id="TIGR00963">
    <property type="entry name" value="secA"/>
    <property type="match status" value="1"/>
</dbReference>
<dbReference type="PANTHER" id="PTHR30612:SF0">
    <property type="entry name" value="CHLOROPLAST PROTEIN-TRANSPORTING ATPASE"/>
    <property type="match status" value="1"/>
</dbReference>
<dbReference type="PANTHER" id="PTHR30612">
    <property type="entry name" value="SECA INNER MEMBRANE COMPONENT OF SEC PROTEIN SECRETION SYSTEM"/>
    <property type="match status" value="1"/>
</dbReference>
<dbReference type="Pfam" id="PF21090">
    <property type="entry name" value="P-loop_SecA"/>
    <property type="match status" value="1"/>
</dbReference>
<dbReference type="Pfam" id="PF07517">
    <property type="entry name" value="SecA_DEAD"/>
    <property type="match status" value="1"/>
</dbReference>
<dbReference type="Pfam" id="PF01043">
    <property type="entry name" value="SecA_PP_bind"/>
    <property type="match status" value="1"/>
</dbReference>
<dbReference type="Pfam" id="PF07516">
    <property type="entry name" value="SecA_SW"/>
    <property type="match status" value="1"/>
</dbReference>
<dbReference type="PRINTS" id="PR00906">
    <property type="entry name" value="SECA"/>
</dbReference>
<dbReference type="SMART" id="SM00957">
    <property type="entry name" value="SecA_DEAD"/>
    <property type="match status" value="1"/>
</dbReference>
<dbReference type="SMART" id="SM00958">
    <property type="entry name" value="SecA_PP_bind"/>
    <property type="match status" value="1"/>
</dbReference>
<dbReference type="SUPFAM" id="SSF81886">
    <property type="entry name" value="Helical scaffold and wing domains of SecA"/>
    <property type="match status" value="1"/>
</dbReference>
<dbReference type="SUPFAM" id="SSF52540">
    <property type="entry name" value="P-loop containing nucleoside triphosphate hydrolases"/>
    <property type="match status" value="2"/>
</dbReference>
<dbReference type="SUPFAM" id="SSF81767">
    <property type="entry name" value="Pre-protein crosslinking domain of SecA"/>
    <property type="match status" value="1"/>
</dbReference>
<dbReference type="PROSITE" id="PS01312">
    <property type="entry name" value="SECA"/>
    <property type="match status" value="1"/>
</dbReference>
<dbReference type="PROSITE" id="PS51196">
    <property type="entry name" value="SECA_MOTOR_DEAD"/>
    <property type="match status" value="1"/>
</dbReference>
<reference key="1">
    <citation type="journal article" date="2007" name="PLoS Genet.">
        <title>Patterns and implications of gene gain and loss in the evolution of Prochlorococcus.</title>
        <authorList>
            <person name="Kettler G.C."/>
            <person name="Martiny A.C."/>
            <person name="Huang K."/>
            <person name="Zucker J."/>
            <person name="Coleman M.L."/>
            <person name="Rodrigue S."/>
            <person name="Chen F."/>
            <person name="Lapidus A."/>
            <person name="Ferriera S."/>
            <person name="Johnson J."/>
            <person name="Steglich C."/>
            <person name="Church G.M."/>
            <person name="Richardson P."/>
            <person name="Chisholm S.W."/>
        </authorList>
    </citation>
    <scope>NUCLEOTIDE SEQUENCE [LARGE SCALE GENOMIC DNA]</scope>
    <source>
        <strain>NATL1A</strain>
    </source>
</reference>